<gene>
    <name evidence="1" type="primary">NP</name>
</gene>
<reference key="1">
    <citation type="journal article" date="2004" name="Nature">
        <title>Genesis of a highly pathogenic and potentially pandemic H5N1 influenza virus in eastern Asia.</title>
        <authorList>
            <person name="Li K.S."/>
            <person name="Guan Y."/>
            <person name="Wang J."/>
            <person name="Smith G.J.D."/>
            <person name="Xu K.M."/>
            <person name="Duan L."/>
            <person name="Rahardjo A.P."/>
            <person name="Puthavathana P."/>
            <person name="Buranathai C."/>
            <person name="Nguyen T.D."/>
            <person name="Estoepangestie A.T.S."/>
            <person name="Chaisingh A."/>
            <person name="Auewarakul P."/>
            <person name="Long H.T."/>
            <person name="Hanh N.T.H."/>
            <person name="Webby R.J."/>
            <person name="Poon L.L.M."/>
            <person name="Chen H."/>
            <person name="Shortridge K.F."/>
            <person name="Yuen K.Y."/>
            <person name="Webster R.G."/>
            <person name="Peiris J.S.M."/>
        </authorList>
    </citation>
    <scope>NUCLEOTIDE SEQUENCE [GENOMIC RNA]</scope>
</reference>
<evidence type="ECO:0000255" key="1">
    <source>
        <dbReference type="HAMAP-Rule" id="MF_04070"/>
    </source>
</evidence>
<evidence type="ECO:0000256" key="2">
    <source>
        <dbReference type="SAM" id="MobiDB-lite"/>
    </source>
</evidence>
<organism>
    <name type="scientific">Influenza A virus (strain A/Silky Chicken/Hong Kong/YU100/2002 H5N1 genotype X3)</name>
    <dbReference type="NCBI Taxonomy" id="284214"/>
    <lineage>
        <taxon>Viruses</taxon>
        <taxon>Riboviria</taxon>
        <taxon>Orthornavirae</taxon>
        <taxon>Negarnaviricota</taxon>
        <taxon>Polyploviricotina</taxon>
        <taxon>Insthoviricetes</taxon>
        <taxon>Articulavirales</taxon>
        <taxon>Orthomyxoviridae</taxon>
        <taxon>Alphainfluenzavirus</taxon>
        <taxon>Alphainfluenzavirus influenzae</taxon>
        <taxon>Influenza A virus</taxon>
    </lineage>
</organism>
<name>NCAP_I02A4</name>
<accession>Q6DPE6</accession>
<keyword id="KW-0167">Capsid protein</keyword>
<keyword id="KW-1139">Helical capsid protein</keyword>
<keyword id="KW-1048">Host nucleus</keyword>
<keyword id="KW-0945">Host-virus interaction</keyword>
<keyword id="KW-0687">Ribonucleoprotein</keyword>
<keyword id="KW-0694">RNA-binding</keyword>
<keyword id="KW-0543">Viral nucleoprotein</keyword>
<keyword id="KW-1163">Viral penetration into host nucleus</keyword>
<keyword id="KW-0946">Virion</keyword>
<keyword id="KW-1160">Virus entry into host cell</keyword>
<sequence>MASQGTKRSYEQMETGGERQNATEIRASVGRMVSGIGRFYIQMCTELKLSDYEGRLIQNSITIERMVLSAFDERRNRYLEGHPSAGKDPKKTGGPIYRRRDGKWVRELILYDKEEIRRIWRQANNGEDATAGLTHLMIWHSNLNDATYQRTRALVRTGMDPRMCSLMQGSTLPRRSGAAGAAIKGVGTMVMELIRMIKRGINDRNFWRGENGRRTRIAYERMCNILKGKFQTAAQRAMMDQVRESRNPGNAEIEDLIFLARSALILRGSVAHKSCLPACVYGLAVASGYDFEREGYSLVGIDPFRLLQNSQVFSLIRPNENPAHKSQLVWMACHSAAFEDLRVSSFIRGTRVVPRGQLSTRGVQIASNENMEAMDSNTLELRSRYWAIRTRSGGNTNQQRASAGQISVQPTFSVQRNLPFERATIMAAFTGNTEGRTSDMRTEIIRMMESARPEDVSFQGRGVFELSDEKATNPIVPSFDMNNEGSYFFGDNAEEYDN</sequence>
<dbReference type="EMBL" id="AY651513">
    <property type="protein sequence ID" value="AAT70644.1"/>
    <property type="molecule type" value="Genomic_RNA"/>
</dbReference>
<dbReference type="SMR" id="Q6DPE6"/>
<dbReference type="GO" id="GO:0019029">
    <property type="term" value="C:helical viral capsid"/>
    <property type="evidence" value="ECO:0007669"/>
    <property type="project" value="UniProtKB-UniRule"/>
</dbReference>
<dbReference type="GO" id="GO:0043657">
    <property type="term" value="C:host cell"/>
    <property type="evidence" value="ECO:0007669"/>
    <property type="project" value="GOC"/>
</dbReference>
<dbReference type="GO" id="GO:0042025">
    <property type="term" value="C:host cell nucleus"/>
    <property type="evidence" value="ECO:0007669"/>
    <property type="project" value="UniProtKB-SubCell"/>
</dbReference>
<dbReference type="GO" id="GO:1990904">
    <property type="term" value="C:ribonucleoprotein complex"/>
    <property type="evidence" value="ECO:0007669"/>
    <property type="project" value="UniProtKB-KW"/>
</dbReference>
<dbReference type="GO" id="GO:0019013">
    <property type="term" value="C:viral nucleocapsid"/>
    <property type="evidence" value="ECO:0007669"/>
    <property type="project" value="UniProtKB-UniRule"/>
</dbReference>
<dbReference type="GO" id="GO:0003723">
    <property type="term" value="F:RNA binding"/>
    <property type="evidence" value="ECO:0007669"/>
    <property type="project" value="UniProtKB-UniRule"/>
</dbReference>
<dbReference type="GO" id="GO:0005198">
    <property type="term" value="F:structural molecule activity"/>
    <property type="evidence" value="ECO:0007669"/>
    <property type="project" value="UniProtKB-UniRule"/>
</dbReference>
<dbReference type="GO" id="GO:0046718">
    <property type="term" value="P:symbiont entry into host cell"/>
    <property type="evidence" value="ECO:0007669"/>
    <property type="project" value="UniProtKB-KW"/>
</dbReference>
<dbReference type="GO" id="GO:0075732">
    <property type="term" value="P:viral penetration into host nucleus"/>
    <property type="evidence" value="ECO:0007669"/>
    <property type="project" value="UniProtKB-UniRule"/>
</dbReference>
<dbReference type="HAMAP" id="MF_04070">
    <property type="entry name" value="INFV_NCAP"/>
    <property type="match status" value="1"/>
</dbReference>
<dbReference type="InterPro" id="IPR002141">
    <property type="entry name" value="Flu_NP"/>
</dbReference>
<dbReference type="Pfam" id="PF00506">
    <property type="entry name" value="Flu_NP"/>
    <property type="match status" value="1"/>
</dbReference>
<dbReference type="SUPFAM" id="SSF161003">
    <property type="entry name" value="flu NP-like"/>
    <property type="match status" value="1"/>
</dbReference>
<feature type="chain" id="PRO_0000310922" description="Nucleoprotein">
    <location>
        <begin position="1"/>
        <end position="498"/>
    </location>
</feature>
<feature type="region of interest" description="Disordered" evidence="2">
    <location>
        <begin position="1"/>
        <end position="21"/>
    </location>
</feature>
<feature type="short sequence motif" description="Unconventional nuclear localization signal" evidence="1">
    <location>
        <begin position="1"/>
        <end position="18"/>
    </location>
</feature>
<feature type="short sequence motif" description="Bipartite nuclear localization signal" evidence="1">
    <location>
        <begin position="198"/>
        <end position="216"/>
    </location>
</feature>
<comment type="function">
    <text evidence="1">Encapsidates the negative strand viral RNA, protecting it from nucleases. The encapsidated genomic RNA is termed the ribonucleoprotein (RNP) and serves as template for transcription and replication. The RNP needs to be localized in the host nucleus to start an infectious cycle, but is too large to diffuse through the nuclear pore complex. NP comprises at least 2 nuclear localization signals that are responsible for the active RNP import into the nucleus through cellular importin alpha/beta pathway. Later in the infection, nclear export of RNPs are mediated through viral proteins NEP interacting with M1 which binds nucleoproteins. It is possible that nucleoprotein binds directly host exportin-1/XPO1 and plays an active role in RNPs nuclear export. M1 interaction with RNP seems to hide nucleoprotein's nuclear localization signals. Soon after a virion infects a new cell, M1 dissociates from the RNP under acidification of the virion driven by M2 protein. Dissociation of M1 from RNP unmasks nucleoprotein's nuclear localization signals, targeting the RNP to the nucleus.</text>
</comment>
<comment type="subunit">
    <text evidence="1">Homomultimerizes to form the nucleocapsid. May bind host exportin-1/XPO1. Binds to viral genomic RNA. Protein-RNA contacts are mediated by a combination of electrostatic interactions between positively charged residues and the phosphate backbone and planar interactions between aromatic side chains and bases.</text>
</comment>
<comment type="subcellular location">
    <subcellularLocation>
        <location evidence="1">Virion</location>
    </subcellularLocation>
    <subcellularLocation>
        <location evidence="1">Host nucleus</location>
    </subcellularLocation>
</comment>
<comment type="PTM">
    <text evidence="1">Late in virus-infected cells, may be cleaved from a 56-kDa protein to a 53-kDa protein by a cellular caspase. This cleavage might be a marker for the onset of apoptosis in infected cells or have a specific function in virus host interaction.</text>
</comment>
<comment type="similarity">
    <text evidence="1">Belongs to the influenza viruses nucleoprotein family.</text>
</comment>
<proteinExistence type="inferred from homology"/>
<protein>
    <recommendedName>
        <fullName evidence="1">Nucleoprotein</fullName>
    </recommendedName>
    <alternativeName>
        <fullName evidence="1">Nucleocapsid protein</fullName>
        <shortName evidence="1">Protein N</shortName>
    </alternativeName>
</protein>
<organismHost>
    <name type="scientific">Aves</name>
    <dbReference type="NCBI Taxonomy" id="8782"/>
</organismHost>
<organismHost>
    <name type="scientific">Felis catus</name>
    <name type="common">Cat</name>
    <name type="synonym">Felis silvestris catus</name>
    <dbReference type="NCBI Taxonomy" id="9685"/>
</organismHost>
<organismHost>
    <name type="scientific">Homo sapiens</name>
    <name type="common">Human</name>
    <dbReference type="NCBI Taxonomy" id="9606"/>
</organismHost>
<organismHost>
    <name type="scientific">Panthera pardus</name>
    <name type="common">Leopard</name>
    <name type="synonym">Felis pardus</name>
    <dbReference type="NCBI Taxonomy" id="9691"/>
</organismHost>
<organismHost>
    <name type="scientific">Panthera tigris</name>
    <name type="common">Tiger</name>
    <dbReference type="NCBI Taxonomy" id="9694"/>
</organismHost>
<organismHost>
    <name type="scientific">Sus scrofa</name>
    <name type="common">Pig</name>
    <dbReference type="NCBI Taxonomy" id="9823"/>
</organismHost>